<name>KAD_WOLSU</name>
<organism>
    <name type="scientific">Wolinella succinogenes (strain ATCC 29543 / DSM 1740 / CCUG 13145 / JCM 31913 / LMG 7466 / NCTC 11488 / FDC 602W)</name>
    <name type="common">Vibrio succinogenes</name>
    <dbReference type="NCBI Taxonomy" id="273121"/>
    <lineage>
        <taxon>Bacteria</taxon>
        <taxon>Pseudomonadati</taxon>
        <taxon>Campylobacterota</taxon>
        <taxon>Epsilonproteobacteria</taxon>
        <taxon>Campylobacterales</taxon>
        <taxon>Helicobacteraceae</taxon>
        <taxon>Wolinella</taxon>
    </lineage>
</organism>
<keyword id="KW-0067">ATP-binding</keyword>
<keyword id="KW-0963">Cytoplasm</keyword>
<keyword id="KW-0418">Kinase</keyword>
<keyword id="KW-0545">Nucleotide biosynthesis</keyword>
<keyword id="KW-0547">Nucleotide-binding</keyword>
<keyword id="KW-1185">Reference proteome</keyword>
<keyword id="KW-0808">Transferase</keyword>
<proteinExistence type="inferred from homology"/>
<comment type="function">
    <text evidence="1">Catalyzes the reversible transfer of the terminal phosphate group between ATP and AMP. Plays an important role in cellular energy homeostasis and in adenine nucleotide metabolism.</text>
</comment>
<comment type="catalytic activity">
    <reaction evidence="1">
        <text>AMP + ATP = 2 ADP</text>
        <dbReference type="Rhea" id="RHEA:12973"/>
        <dbReference type="ChEBI" id="CHEBI:30616"/>
        <dbReference type="ChEBI" id="CHEBI:456215"/>
        <dbReference type="ChEBI" id="CHEBI:456216"/>
        <dbReference type="EC" id="2.7.4.3"/>
    </reaction>
</comment>
<comment type="pathway">
    <text evidence="1">Purine metabolism; AMP biosynthesis via salvage pathway; AMP from ADP: step 1/1.</text>
</comment>
<comment type="subunit">
    <text evidence="1">Monomer.</text>
</comment>
<comment type="subcellular location">
    <subcellularLocation>
        <location evidence="1">Cytoplasm</location>
    </subcellularLocation>
</comment>
<comment type="domain">
    <text evidence="1">Consists of three domains, a large central CORE domain and two small peripheral domains, NMPbind and LID, which undergo movements during catalysis. The LID domain closes over the site of phosphoryl transfer upon ATP binding. Assembling and dissambling the active center during each catalytic cycle provides an effective means to prevent ATP hydrolysis.</text>
</comment>
<comment type="similarity">
    <text evidence="1">Belongs to the adenylate kinase family.</text>
</comment>
<evidence type="ECO:0000255" key="1">
    <source>
        <dbReference type="HAMAP-Rule" id="MF_00235"/>
    </source>
</evidence>
<feature type="chain" id="PRO_0000158888" description="Adenylate kinase">
    <location>
        <begin position="1"/>
        <end position="190"/>
    </location>
</feature>
<feature type="region of interest" description="NMP" evidence="1">
    <location>
        <begin position="34"/>
        <end position="63"/>
    </location>
</feature>
<feature type="region of interest" description="LID" evidence="1">
    <location>
        <begin position="130"/>
        <end position="136"/>
    </location>
</feature>
<feature type="binding site" evidence="1">
    <location>
        <begin position="12"/>
        <end position="17"/>
    </location>
    <ligand>
        <name>ATP</name>
        <dbReference type="ChEBI" id="CHEBI:30616"/>
    </ligand>
</feature>
<feature type="binding site" evidence="1">
    <location>
        <position position="35"/>
    </location>
    <ligand>
        <name>AMP</name>
        <dbReference type="ChEBI" id="CHEBI:456215"/>
    </ligand>
</feature>
<feature type="binding site" evidence="1">
    <location>
        <position position="40"/>
    </location>
    <ligand>
        <name>AMP</name>
        <dbReference type="ChEBI" id="CHEBI:456215"/>
    </ligand>
</feature>
<feature type="binding site" evidence="1">
    <location>
        <begin position="61"/>
        <end position="63"/>
    </location>
    <ligand>
        <name>AMP</name>
        <dbReference type="ChEBI" id="CHEBI:456215"/>
    </ligand>
</feature>
<feature type="binding site" evidence="1">
    <location>
        <begin position="88"/>
        <end position="91"/>
    </location>
    <ligand>
        <name>AMP</name>
        <dbReference type="ChEBI" id="CHEBI:456215"/>
    </ligand>
</feature>
<feature type="binding site" evidence="1">
    <location>
        <position position="95"/>
    </location>
    <ligand>
        <name>AMP</name>
        <dbReference type="ChEBI" id="CHEBI:456215"/>
    </ligand>
</feature>
<feature type="binding site" evidence="1">
    <location>
        <position position="131"/>
    </location>
    <ligand>
        <name>ATP</name>
        <dbReference type="ChEBI" id="CHEBI:30616"/>
    </ligand>
</feature>
<feature type="binding site" evidence="1">
    <location>
        <position position="133"/>
    </location>
    <ligand>
        <name>AMP</name>
        <dbReference type="ChEBI" id="CHEBI:456215"/>
    </ligand>
</feature>
<feature type="binding site" evidence="1">
    <location>
        <position position="145"/>
    </location>
    <ligand>
        <name>AMP</name>
        <dbReference type="ChEBI" id="CHEBI:456215"/>
    </ligand>
</feature>
<feature type="binding site" evidence="1">
    <location>
        <position position="173"/>
    </location>
    <ligand>
        <name>ATP</name>
        <dbReference type="ChEBI" id="CHEBI:30616"/>
    </ligand>
</feature>
<accession>Q7M8A5</accession>
<dbReference type="EC" id="2.7.4.3" evidence="1"/>
<dbReference type="EMBL" id="BX571661">
    <property type="protein sequence ID" value="CAE10804.1"/>
    <property type="molecule type" value="Genomic_DNA"/>
</dbReference>
<dbReference type="RefSeq" id="WP_011139587.1">
    <property type="nucleotide sequence ID" value="NC_005090.1"/>
</dbReference>
<dbReference type="SMR" id="Q7M8A5"/>
<dbReference type="STRING" id="273121.WS1782"/>
<dbReference type="KEGG" id="wsu:WS1782"/>
<dbReference type="eggNOG" id="COG0563">
    <property type="taxonomic scope" value="Bacteria"/>
</dbReference>
<dbReference type="HOGENOM" id="CLU_032354_4_1_7"/>
<dbReference type="UniPathway" id="UPA00588">
    <property type="reaction ID" value="UER00649"/>
</dbReference>
<dbReference type="Proteomes" id="UP000000422">
    <property type="component" value="Chromosome"/>
</dbReference>
<dbReference type="GO" id="GO:0005737">
    <property type="term" value="C:cytoplasm"/>
    <property type="evidence" value="ECO:0007669"/>
    <property type="project" value="UniProtKB-SubCell"/>
</dbReference>
<dbReference type="GO" id="GO:0004017">
    <property type="term" value="F:adenylate kinase activity"/>
    <property type="evidence" value="ECO:0007669"/>
    <property type="project" value="UniProtKB-UniRule"/>
</dbReference>
<dbReference type="GO" id="GO:0005524">
    <property type="term" value="F:ATP binding"/>
    <property type="evidence" value="ECO:0007669"/>
    <property type="project" value="UniProtKB-UniRule"/>
</dbReference>
<dbReference type="GO" id="GO:0044209">
    <property type="term" value="P:AMP salvage"/>
    <property type="evidence" value="ECO:0007669"/>
    <property type="project" value="UniProtKB-UniRule"/>
</dbReference>
<dbReference type="CDD" id="cd01428">
    <property type="entry name" value="ADK"/>
    <property type="match status" value="1"/>
</dbReference>
<dbReference type="Gene3D" id="3.40.50.300">
    <property type="entry name" value="P-loop containing nucleotide triphosphate hydrolases"/>
    <property type="match status" value="1"/>
</dbReference>
<dbReference type="HAMAP" id="MF_00235">
    <property type="entry name" value="Adenylate_kinase_Adk"/>
    <property type="match status" value="1"/>
</dbReference>
<dbReference type="InterPro" id="IPR000850">
    <property type="entry name" value="Adenylat/UMP-CMP_kin"/>
</dbReference>
<dbReference type="InterPro" id="IPR033690">
    <property type="entry name" value="Adenylat_kinase_CS"/>
</dbReference>
<dbReference type="InterPro" id="IPR027417">
    <property type="entry name" value="P-loop_NTPase"/>
</dbReference>
<dbReference type="NCBIfam" id="NF001384">
    <property type="entry name" value="PRK00279.2-2"/>
    <property type="match status" value="1"/>
</dbReference>
<dbReference type="PANTHER" id="PTHR23359">
    <property type="entry name" value="NUCLEOTIDE KINASE"/>
    <property type="match status" value="1"/>
</dbReference>
<dbReference type="Pfam" id="PF00406">
    <property type="entry name" value="ADK"/>
    <property type="match status" value="1"/>
</dbReference>
<dbReference type="PRINTS" id="PR00094">
    <property type="entry name" value="ADENYLTKNASE"/>
</dbReference>
<dbReference type="SUPFAM" id="SSF52540">
    <property type="entry name" value="P-loop containing nucleoside triphosphate hydrolases"/>
    <property type="match status" value="1"/>
</dbReference>
<dbReference type="PROSITE" id="PS00113">
    <property type="entry name" value="ADENYLATE_KINASE"/>
    <property type="match status" value="1"/>
</dbReference>
<gene>
    <name evidence="1" type="primary">adk</name>
    <name type="ordered locus">WS1782</name>
</gene>
<protein>
    <recommendedName>
        <fullName evidence="1">Adenylate kinase</fullName>
        <shortName evidence="1">AK</shortName>
        <ecNumber evidence="1">2.7.4.3</ecNumber>
    </recommendedName>
    <alternativeName>
        <fullName evidence="1">ATP-AMP transphosphorylase</fullName>
    </alternativeName>
    <alternativeName>
        <fullName evidence="1">ATP:AMP phosphotransferase</fullName>
    </alternativeName>
    <alternativeName>
        <fullName evidence="1">Adenylate monophosphate kinase</fullName>
    </alternativeName>
</protein>
<reference key="1">
    <citation type="journal article" date="2003" name="Proc. Natl. Acad. Sci. U.S.A.">
        <title>Complete genome sequence and analysis of Wolinella succinogenes.</title>
        <authorList>
            <person name="Baar C."/>
            <person name="Eppinger M."/>
            <person name="Raddatz G."/>
            <person name="Simon J."/>
            <person name="Lanz C."/>
            <person name="Klimmek O."/>
            <person name="Nandakumar R."/>
            <person name="Gross R."/>
            <person name="Rosinus A."/>
            <person name="Keller H."/>
            <person name="Jagtap P."/>
            <person name="Linke B."/>
            <person name="Meyer F."/>
            <person name="Lederer H."/>
            <person name="Schuster S.C."/>
        </authorList>
    </citation>
    <scope>NUCLEOTIDE SEQUENCE [LARGE SCALE GENOMIC DNA]</scope>
    <source>
        <strain>ATCC 29543 / DSM 1740 / CCUG 13145 / JCM 31913 / LMG 7466 / NCTC 11488 / FDC 602W</strain>
    </source>
</reference>
<sequence>MKKLFLIIGAPGSGKTTDAEIIAKNNPDSINHYSTGELLRAEVASGSERGKIIEGFTSKGNLVPLEIVVETIVSAIKNAPKNVVLIDGYPRSTEQMEALDKILKEESDVELTNVIEVEVSEQVACDRVLGRARGADDNAEVFRNRMSVYLAPLKPIQAFYTAKGILHKINGERTIEEIVSEMEGFIKSRL</sequence>